<protein>
    <recommendedName>
        <fullName evidence="1">3-octaprenyl-4-hydroxybenzoate carboxy-lyase</fullName>
        <ecNumber evidence="1">4.1.1.98</ecNumber>
    </recommendedName>
    <alternativeName>
        <fullName evidence="1">Polyprenyl p-hydroxybenzoate decarboxylase</fullName>
    </alternativeName>
</protein>
<keyword id="KW-1003">Cell membrane</keyword>
<keyword id="KW-0210">Decarboxylase</keyword>
<keyword id="KW-0285">Flavoprotein</keyword>
<keyword id="KW-0288">FMN</keyword>
<keyword id="KW-0456">Lyase</keyword>
<keyword id="KW-0464">Manganese</keyword>
<keyword id="KW-0472">Membrane</keyword>
<keyword id="KW-0479">Metal-binding</keyword>
<keyword id="KW-0831">Ubiquinone biosynthesis</keyword>
<feature type="chain" id="PRO_1000069851" description="3-octaprenyl-4-hydroxybenzoate carboxy-lyase">
    <location>
        <begin position="1"/>
        <end position="487"/>
    </location>
</feature>
<feature type="active site" description="Proton donor" evidence="1">
    <location>
        <position position="287"/>
    </location>
</feature>
<feature type="binding site" evidence="1">
    <location>
        <position position="172"/>
    </location>
    <ligand>
        <name>Mn(2+)</name>
        <dbReference type="ChEBI" id="CHEBI:29035"/>
    </ligand>
</feature>
<feature type="binding site" evidence="1">
    <location>
        <begin position="175"/>
        <end position="177"/>
    </location>
    <ligand>
        <name>prenylated FMN</name>
        <dbReference type="ChEBI" id="CHEBI:87746"/>
    </ligand>
</feature>
<feature type="binding site" evidence="1">
    <location>
        <begin position="189"/>
        <end position="191"/>
    </location>
    <ligand>
        <name>prenylated FMN</name>
        <dbReference type="ChEBI" id="CHEBI:87746"/>
    </ligand>
</feature>
<feature type="binding site" evidence="1">
    <location>
        <begin position="194"/>
        <end position="195"/>
    </location>
    <ligand>
        <name>prenylated FMN</name>
        <dbReference type="ChEBI" id="CHEBI:87746"/>
    </ligand>
</feature>
<feature type="binding site" evidence="1">
    <location>
        <position position="238"/>
    </location>
    <ligand>
        <name>Mn(2+)</name>
        <dbReference type="ChEBI" id="CHEBI:29035"/>
    </ligand>
</feature>
<organism>
    <name type="scientific">Nitrosomonas eutropha (strain DSM 101675 / C91 / Nm57)</name>
    <dbReference type="NCBI Taxonomy" id="335283"/>
    <lineage>
        <taxon>Bacteria</taxon>
        <taxon>Pseudomonadati</taxon>
        <taxon>Pseudomonadota</taxon>
        <taxon>Betaproteobacteria</taxon>
        <taxon>Nitrosomonadales</taxon>
        <taxon>Nitrosomonadaceae</taxon>
        <taxon>Nitrosomonas</taxon>
    </lineage>
</organism>
<proteinExistence type="inferred from homology"/>
<accession>Q0AH00</accession>
<comment type="function">
    <text evidence="1">Catalyzes the decarboxylation of 3-octaprenyl-4-hydroxy benzoate to 2-octaprenylphenol, an intermediate step in ubiquinone biosynthesis.</text>
</comment>
<comment type="catalytic activity">
    <reaction evidence="1">
        <text>a 4-hydroxy-3-(all-trans-polyprenyl)benzoate + H(+) = a 2-(all-trans-polyprenyl)phenol + CO2</text>
        <dbReference type="Rhea" id="RHEA:41680"/>
        <dbReference type="Rhea" id="RHEA-COMP:9514"/>
        <dbReference type="Rhea" id="RHEA-COMP:9516"/>
        <dbReference type="ChEBI" id="CHEBI:1269"/>
        <dbReference type="ChEBI" id="CHEBI:15378"/>
        <dbReference type="ChEBI" id="CHEBI:16526"/>
        <dbReference type="ChEBI" id="CHEBI:78396"/>
        <dbReference type="EC" id="4.1.1.98"/>
    </reaction>
</comment>
<comment type="cofactor">
    <cofactor evidence="1">
        <name>prenylated FMN</name>
        <dbReference type="ChEBI" id="CHEBI:87746"/>
    </cofactor>
    <text evidence="1">Binds 1 prenylated FMN per subunit.</text>
</comment>
<comment type="cofactor">
    <cofactor evidence="1">
        <name>Mn(2+)</name>
        <dbReference type="ChEBI" id="CHEBI:29035"/>
    </cofactor>
</comment>
<comment type="pathway">
    <text evidence="1">Cofactor biosynthesis; ubiquinone biosynthesis.</text>
</comment>
<comment type="subunit">
    <text evidence="1">Homohexamer.</text>
</comment>
<comment type="subcellular location">
    <subcellularLocation>
        <location evidence="1">Cell membrane</location>
        <topology evidence="1">Peripheral membrane protein</topology>
    </subcellularLocation>
</comment>
<comment type="similarity">
    <text evidence="1">Belongs to the UbiD family.</text>
</comment>
<gene>
    <name evidence="1" type="primary">ubiD</name>
    <name type="ordered locus">Neut_1127</name>
</gene>
<name>UBID_NITEC</name>
<dbReference type="EC" id="4.1.1.98" evidence="1"/>
<dbReference type="EMBL" id="CP000450">
    <property type="protein sequence ID" value="ABI59382.1"/>
    <property type="molecule type" value="Genomic_DNA"/>
</dbReference>
<dbReference type="RefSeq" id="WP_011634202.1">
    <property type="nucleotide sequence ID" value="NC_008344.1"/>
</dbReference>
<dbReference type="SMR" id="Q0AH00"/>
<dbReference type="STRING" id="335283.Neut_1127"/>
<dbReference type="KEGG" id="net:Neut_1127"/>
<dbReference type="eggNOG" id="COG0043">
    <property type="taxonomic scope" value="Bacteria"/>
</dbReference>
<dbReference type="HOGENOM" id="CLU_023348_4_1_4"/>
<dbReference type="OrthoDB" id="9809841at2"/>
<dbReference type="UniPathway" id="UPA00232"/>
<dbReference type="Proteomes" id="UP000001966">
    <property type="component" value="Chromosome"/>
</dbReference>
<dbReference type="GO" id="GO:0005829">
    <property type="term" value="C:cytosol"/>
    <property type="evidence" value="ECO:0007669"/>
    <property type="project" value="TreeGrafter"/>
</dbReference>
<dbReference type="GO" id="GO:0005886">
    <property type="term" value="C:plasma membrane"/>
    <property type="evidence" value="ECO:0007669"/>
    <property type="project" value="UniProtKB-SubCell"/>
</dbReference>
<dbReference type="GO" id="GO:0008694">
    <property type="term" value="F:3-octaprenyl-4-hydroxybenzoate carboxy-lyase activity"/>
    <property type="evidence" value="ECO:0007669"/>
    <property type="project" value="UniProtKB-UniRule"/>
</dbReference>
<dbReference type="GO" id="GO:0046872">
    <property type="term" value="F:metal ion binding"/>
    <property type="evidence" value="ECO:0007669"/>
    <property type="project" value="UniProtKB-KW"/>
</dbReference>
<dbReference type="GO" id="GO:0006744">
    <property type="term" value="P:ubiquinone biosynthetic process"/>
    <property type="evidence" value="ECO:0007669"/>
    <property type="project" value="UniProtKB-UniRule"/>
</dbReference>
<dbReference type="FunFam" id="1.20.5.570:FF:000001">
    <property type="entry name" value="3-octaprenyl-4-hydroxybenzoate carboxy-lyase"/>
    <property type="match status" value="1"/>
</dbReference>
<dbReference type="FunFam" id="3.40.1670.10:FF:000001">
    <property type="entry name" value="3-octaprenyl-4-hydroxybenzoate carboxy-lyase"/>
    <property type="match status" value="1"/>
</dbReference>
<dbReference type="Gene3D" id="1.20.5.570">
    <property type="entry name" value="Single helix bin"/>
    <property type="match status" value="1"/>
</dbReference>
<dbReference type="Gene3D" id="3.40.1670.10">
    <property type="entry name" value="UbiD C-terminal domain-like"/>
    <property type="match status" value="1"/>
</dbReference>
<dbReference type="HAMAP" id="MF_01636">
    <property type="entry name" value="UbiD"/>
    <property type="match status" value="1"/>
</dbReference>
<dbReference type="InterPro" id="IPR002830">
    <property type="entry name" value="UbiD"/>
</dbReference>
<dbReference type="InterPro" id="IPR049381">
    <property type="entry name" value="UbiD-like_C"/>
</dbReference>
<dbReference type="InterPro" id="IPR049383">
    <property type="entry name" value="UbiD-like_N"/>
</dbReference>
<dbReference type="InterPro" id="IPR023677">
    <property type="entry name" value="UbiD_bacteria"/>
</dbReference>
<dbReference type="InterPro" id="IPR048304">
    <property type="entry name" value="UbiD_Rift_dom"/>
</dbReference>
<dbReference type="NCBIfam" id="NF008175">
    <property type="entry name" value="PRK10922.1"/>
    <property type="match status" value="1"/>
</dbReference>
<dbReference type="NCBIfam" id="TIGR00148">
    <property type="entry name" value="UbiD family decarboxylase"/>
    <property type="match status" value="1"/>
</dbReference>
<dbReference type="PANTHER" id="PTHR30108">
    <property type="entry name" value="3-OCTAPRENYL-4-HYDROXYBENZOATE CARBOXY-LYASE-RELATED"/>
    <property type="match status" value="1"/>
</dbReference>
<dbReference type="PANTHER" id="PTHR30108:SF17">
    <property type="entry name" value="FERULIC ACID DECARBOXYLASE 1"/>
    <property type="match status" value="1"/>
</dbReference>
<dbReference type="Pfam" id="PF01977">
    <property type="entry name" value="UbiD"/>
    <property type="match status" value="1"/>
</dbReference>
<dbReference type="Pfam" id="PF20696">
    <property type="entry name" value="UbiD_C"/>
    <property type="match status" value="1"/>
</dbReference>
<dbReference type="Pfam" id="PF20695">
    <property type="entry name" value="UbiD_N"/>
    <property type="match status" value="1"/>
</dbReference>
<dbReference type="SUPFAM" id="SSF50475">
    <property type="entry name" value="FMN-binding split barrel"/>
    <property type="match status" value="1"/>
</dbReference>
<dbReference type="SUPFAM" id="SSF143968">
    <property type="entry name" value="UbiD C-terminal domain-like"/>
    <property type="match status" value="1"/>
</dbReference>
<sequence length="487" mass="54757">MKYNDLRDFLAQLELRGELKRVDIEVSPHLEMTEICDRLLKQAGPAVLFERPAGHTIPVLGNLFGTPERVALGMGQTSVSALREVGKLLAYLKEPEPPKGLRDAWDKLPILKQVLNMPPRELASAPCQEIVWEGADVDLSKLPIQTCWPGDVASLITWGLTVTRGPHKSRQNLGIYRQQVIAPNKVIMRWLAHRGGALDYRDFCQINPGEPYPVAVALGADPATILGAVTPVPDSLSEYQFAGLLRGAKTEIVKCLTHDLQVPASAEIVLEGYIYPNETALEGPYGDHTGYYNEQETFPVFTIERITMRRDPIYHSTYTGKPPDEPAILGVALNEVFVPLLQKQFTEITDFYLPPEGCSYRLAVVSMKKQYPGHAKRVMFGIWSFLRQFMYTKFIIVTDDDINIRDWKEVIWAITTRVDPVRDTLIVENTPIDYLDFASPVSGLGSKMGLDATNKWPGETSREWGRVIEMDAAVKARVDHLWQQLLF</sequence>
<reference key="1">
    <citation type="journal article" date="2007" name="Environ. Microbiol.">
        <title>Whole-genome analysis of the ammonia-oxidizing bacterium, Nitrosomonas eutropha C91: implications for niche adaptation.</title>
        <authorList>
            <person name="Stein L.Y."/>
            <person name="Arp D.J."/>
            <person name="Berube P.M."/>
            <person name="Chain P.S."/>
            <person name="Hauser L."/>
            <person name="Jetten M.S."/>
            <person name="Klotz M.G."/>
            <person name="Larimer F.W."/>
            <person name="Norton J.M."/>
            <person name="Op den Camp H.J.M."/>
            <person name="Shin M."/>
            <person name="Wei X."/>
        </authorList>
    </citation>
    <scope>NUCLEOTIDE SEQUENCE [LARGE SCALE GENOMIC DNA]</scope>
    <source>
        <strain>DSM 101675 / C91 / Nm57</strain>
    </source>
</reference>
<evidence type="ECO:0000255" key="1">
    <source>
        <dbReference type="HAMAP-Rule" id="MF_01636"/>
    </source>
</evidence>